<dbReference type="EMBL" id="CP000142">
    <property type="protein sequence ID" value="ABA87979.1"/>
    <property type="molecule type" value="Genomic_DNA"/>
</dbReference>
<dbReference type="RefSeq" id="WP_011340422.1">
    <property type="nucleotide sequence ID" value="NC_007498.2"/>
</dbReference>
<dbReference type="SMR" id="Q3A6M8"/>
<dbReference type="STRING" id="338963.Pcar_0720"/>
<dbReference type="KEGG" id="pca:Pcar_0720"/>
<dbReference type="eggNOG" id="COG0200">
    <property type="taxonomic scope" value="Bacteria"/>
</dbReference>
<dbReference type="HOGENOM" id="CLU_055188_4_2_7"/>
<dbReference type="OrthoDB" id="9810293at2"/>
<dbReference type="Proteomes" id="UP000002534">
    <property type="component" value="Chromosome"/>
</dbReference>
<dbReference type="GO" id="GO:0022625">
    <property type="term" value="C:cytosolic large ribosomal subunit"/>
    <property type="evidence" value="ECO:0007669"/>
    <property type="project" value="TreeGrafter"/>
</dbReference>
<dbReference type="GO" id="GO:0019843">
    <property type="term" value="F:rRNA binding"/>
    <property type="evidence" value="ECO:0007669"/>
    <property type="project" value="UniProtKB-UniRule"/>
</dbReference>
<dbReference type="GO" id="GO:0003735">
    <property type="term" value="F:structural constituent of ribosome"/>
    <property type="evidence" value="ECO:0007669"/>
    <property type="project" value="InterPro"/>
</dbReference>
<dbReference type="GO" id="GO:0006412">
    <property type="term" value="P:translation"/>
    <property type="evidence" value="ECO:0007669"/>
    <property type="project" value="UniProtKB-UniRule"/>
</dbReference>
<dbReference type="Gene3D" id="3.100.10.10">
    <property type="match status" value="1"/>
</dbReference>
<dbReference type="HAMAP" id="MF_01341">
    <property type="entry name" value="Ribosomal_uL15"/>
    <property type="match status" value="1"/>
</dbReference>
<dbReference type="InterPro" id="IPR030878">
    <property type="entry name" value="Ribosomal_uL15"/>
</dbReference>
<dbReference type="InterPro" id="IPR021131">
    <property type="entry name" value="Ribosomal_uL15/eL18"/>
</dbReference>
<dbReference type="InterPro" id="IPR036227">
    <property type="entry name" value="Ribosomal_uL15/eL18_sf"/>
</dbReference>
<dbReference type="InterPro" id="IPR005749">
    <property type="entry name" value="Ribosomal_uL15_bac-type"/>
</dbReference>
<dbReference type="InterPro" id="IPR001196">
    <property type="entry name" value="Ribosomal_uL15_CS"/>
</dbReference>
<dbReference type="NCBIfam" id="TIGR01071">
    <property type="entry name" value="rplO_bact"/>
    <property type="match status" value="1"/>
</dbReference>
<dbReference type="PANTHER" id="PTHR12934">
    <property type="entry name" value="50S RIBOSOMAL PROTEIN L15"/>
    <property type="match status" value="1"/>
</dbReference>
<dbReference type="PANTHER" id="PTHR12934:SF11">
    <property type="entry name" value="LARGE RIBOSOMAL SUBUNIT PROTEIN UL15M"/>
    <property type="match status" value="1"/>
</dbReference>
<dbReference type="Pfam" id="PF00828">
    <property type="entry name" value="Ribosomal_L27A"/>
    <property type="match status" value="1"/>
</dbReference>
<dbReference type="SUPFAM" id="SSF52080">
    <property type="entry name" value="Ribosomal proteins L15p and L18e"/>
    <property type="match status" value="1"/>
</dbReference>
<dbReference type="PROSITE" id="PS00475">
    <property type="entry name" value="RIBOSOMAL_L15"/>
    <property type="match status" value="1"/>
</dbReference>
<reference key="1">
    <citation type="submission" date="2005-10" db="EMBL/GenBank/DDBJ databases">
        <title>Complete sequence of Pelobacter carbinolicus DSM 2380.</title>
        <authorList>
            <person name="Copeland A."/>
            <person name="Lucas S."/>
            <person name="Lapidus A."/>
            <person name="Barry K."/>
            <person name="Detter J.C."/>
            <person name="Glavina T."/>
            <person name="Hammon N."/>
            <person name="Israni S."/>
            <person name="Pitluck S."/>
            <person name="Chertkov O."/>
            <person name="Schmutz J."/>
            <person name="Larimer F."/>
            <person name="Land M."/>
            <person name="Kyrpides N."/>
            <person name="Ivanova N."/>
            <person name="Richardson P."/>
        </authorList>
    </citation>
    <scope>NUCLEOTIDE SEQUENCE [LARGE SCALE GENOMIC DNA]</scope>
    <source>
        <strain>DSM 2380 / NBRC 103641 / GraBd1</strain>
    </source>
</reference>
<organism>
    <name type="scientific">Syntrophotalea carbinolica (strain DSM 2380 / NBRC 103641 / GraBd1)</name>
    <name type="common">Pelobacter carbinolicus</name>
    <dbReference type="NCBI Taxonomy" id="338963"/>
    <lineage>
        <taxon>Bacteria</taxon>
        <taxon>Pseudomonadati</taxon>
        <taxon>Thermodesulfobacteriota</taxon>
        <taxon>Desulfuromonadia</taxon>
        <taxon>Desulfuromonadales</taxon>
        <taxon>Syntrophotaleaceae</taxon>
        <taxon>Syntrophotalea</taxon>
    </lineage>
</organism>
<proteinExistence type="inferred from homology"/>
<feature type="chain" id="PRO_0000251537" description="Large ribosomal subunit protein uL15">
    <location>
        <begin position="1"/>
        <end position="147"/>
    </location>
</feature>
<feature type="region of interest" description="Disordered" evidence="2">
    <location>
        <begin position="1"/>
        <end position="62"/>
    </location>
</feature>
<feature type="compositionally biased region" description="Gly residues" evidence="2">
    <location>
        <begin position="21"/>
        <end position="31"/>
    </location>
</feature>
<feature type="compositionally biased region" description="Gly residues" evidence="2">
    <location>
        <begin position="42"/>
        <end position="52"/>
    </location>
</feature>
<comment type="function">
    <text evidence="1">Binds to the 23S rRNA.</text>
</comment>
<comment type="subunit">
    <text evidence="1">Part of the 50S ribosomal subunit.</text>
</comment>
<comment type="similarity">
    <text evidence="1">Belongs to the universal ribosomal protein uL15 family.</text>
</comment>
<name>RL15_SYNC1</name>
<sequence length="147" mass="15478">MDLSNLRPAIGSTKNRKRIGRGPGSGNGKTAGKGHKGQNARSGGGVKPGFEGGQMPLQRRLPKRGFKSLNKKVYALVNLRDLQDIFEAGSVVDIEALGQNGLVSRIYDGIKILGDGDLDKALTVKAHKFSQSAIAKIEAAGGKAEVI</sequence>
<evidence type="ECO:0000255" key="1">
    <source>
        <dbReference type="HAMAP-Rule" id="MF_01341"/>
    </source>
</evidence>
<evidence type="ECO:0000256" key="2">
    <source>
        <dbReference type="SAM" id="MobiDB-lite"/>
    </source>
</evidence>
<evidence type="ECO:0000305" key="3"/>
<accession>Q3A6M8</accession>
<gene>
    <name evidence="1" type="primary">rplO</name>
    <name type="ordered locus">Pcar_0720</name>
</gene>
<protein>
    <recommendedName>
        <fullName evidence="1">Large ribosomal subunit protein uL15</fullName>
    </recommendedName>
    <alternativeName>
        <fullName evidence="3">50S ribosomal protein L15</fullName>
    </alternativeName>
</protein>
<keyword id="KW-1185">Reference proteome</keyword>
<keyword id="KW-0687">Ribonucleoprotein</keyword>
<keyword id="KW-0689">Ribosomal protein</keyword>
<keyword id="KW-0694">RNA-binding</keyword>
<keyword id="KW-0699">rRNA-binding</keyword>